<sequence>MSSSASTIVAIASAAGIGGVGIVRLSGAQSVQIAAQLGIARMQPRHAHYARFRDGQGAVIDDGIALWFNAPHSFTGEDVVELQGHGSPVLLRQLVARCIELGARQARAGEFSERAFLNGKLDLAQAEAIADLIAAGDLRAARAARRALDGVFSRRVDAVADTLTRLRIHVEAAIDFADEPLDTLGGNQLRDGLGQARNVLAQLLRDAERGRKLRDGLHAVLIGPPNAGKSSLLNALAGSDRAIVTDVAGTTRDTLHEAIQLDGFELTLVDTAGLRDGGDAIEREGMRRARAELERADLALVVLDARDPQAARDAIGDAIDAVPRQLWIHNKCDLLGNAVSLDANAIAVSAVTGQGLEQLHIRLRALALGDGVDSVEGEFSARTRHVQALRRAEQHVDAADLELGFEQLELAAEELRLAHEALGEITGKLSADDLLGKIFSSFCIGK</sequence>
<evidence type="ECO:0000255" key="1">
    <source>
        <dbReference type="HAMAP-Rule" id="MF_00379"/>
    </source>
</evidence>
<feature type="chain" id="PRO_1000048905" description="tRNA modification GTPase MnmE">
    <location>
        <begin position="1"/>
        <end position="446"/>
    </location>
</feature>
<feature type="domain" description="TrmE-type G">
    <location>
        <begin position="216"/>
        <end position="368"/>
    </location>
</feature>
<feature type="binding site" evidence="1">
    <location>
        <position position="24"/>
    </location>
    <ligand>
        <name>(6S)-5-formyl-5,6,7,8-tetrahydrofolate</name>
        <dbReference type="ChEBI" id="CHEBI:57457"/>
    </ligand>
</feature>
<feature type="binding site" evidence="1">
    <location>
        <position position="81"/>
    </location>
    <ligand>
        <name>(6S)-5-formyl-5,6,7,8-tetrahydrofolate</name>
        <dbReference type="ChEBI" id="CHEBI:57457"/>
    </ligand>
</feature>
<feature type="binding site" evidence="1">
    <location>
        <position position="120"/>
    </location>
    <ligand>
        <name>(6S)-5-formyl-5,6,7,8-tetrahydrofolate</name>
        <dbReference type="ChEBI" id="CHEBI:57457"/>
    </ligand>
</feature>
<feature type="binding site" evidence="1">
    <location>
        <begin position="226"/>
        <end position="231"/>
    </location>
    <ligand>
        <name>GTP</name>
        <dbReference type="ChEBI" id="CHEBI:37565"/>
    </ligand>
</feature>
<feature type="binding site" evidence="1">
    <location>
        <position position="226"/>
    </location>
    <ligand>
        <name>K(+)</name>
        <dbReference type="ChEBI" id="CHEBI:29103"/>
    </ligand>
</feature>
<feature type="binding site" evidence="1">
    <location>
        <position position="230"/>
    </location>
    <ligand>
        <name>Mg(2+)</name>
        <dbReference type="ChEBI" id="CHEBI:18420"/>
    </ligand>
</feature>
<feature type="binding site" evidence="1">
    <location>
        <begin position="245"/>
        <end position="251"/>
    </location>
    <ligand>
        <name>GTP</name>
        <dbReference type="ChEBI" id="CHEBI:37565"/>
    </ligand>
</feature>
<feature type="binding site" evidence="1">
    <location>
        <position position="245"/>
    </location>
    <ligand>
        <name>K(+)</name>
        <dbReference type="ChEBI" id="CHEBI:29103"/>
    </ligand>
</feature>
<feature type="binding site" evidence="1">
    <location>
        <position position="247"/>
    </location>
    <ligand>
        <name>K(+)</name>
        <dbReference type="ChEBI" id="CHEBI:29103"/>
    </ligand>
</feature>
<feature type="binding site" evidence="1">
    <location>
        <position position="250"/>
    </location>
    <ligand>
        <name>K(+)</name>
        <dbReference type="ChEBI" id="CHEBI:29103"/>
    </ligand>
</feature>
<feature type="binding site" evidence="1">
    <location>
        <position position="251"/>
    </location>
    <ligand>
        <name>Mg(2+)</name>
        <dbReference type="ChEBI" id="CHEBI:18420"/>
    </ligand>
</feature>
<feature type="binding site" evidence="1">
    <location>
        <begin position="270"/>
        <end position="273"/>
    </location>
    <ligand>
        <name>GTP</name>
        <dbReference type="ChEBI" id="CHEBI:37565"/>
    </ligand>
</feature>
<feature type="binding site" evidence="1">
    <location>
        <position position="446"/>
    </location>
    <ligand>
        <name>(6S)-5-formyl-5,6,7,8-tetrahydrofolate</name>
        <dbReference type="ChEBI" id="CHEBI:57457"/>
    </ligand>
</feature>
<reference key="1">
    <citation type="journal article" date="2005" name="J. Bacteriol.">
        <title>Insights into genome plasticity and pathogenicity of the plant pathogenic Bacterium Xanthomonas campestris pv. vesicatoria revealed by the complete genome sequence.</title>
        <authorList>
            <person name="Thieme F."/>
            <person name="Koebnik R."/>
            <person name="Bekel T."/>
            <person name="Berger C."/>
            <person name="Boch J."/>
            <person name="Buettner D."/>
            <person name="Caldana C."/>
            <person name="Gaigalat L."/>
            <person name="Goesmann A."/>
            <person name="Kay S."/>
            <person name="Kirchner O."/>
            <person name="Lanz C."/>
            <person name="Linke B."/>
            <person name="McHardy A.C."/>
            <person name="Meyer F."/>
            <person name="Mittenhuber G."/>
            <person name="Nies D.H."/>
            <person name="Niesbach-Kloesgen U."/>
            <person name="Patschkowski T."/>
            <person name="Rueckert C."/>
            <person name="Rupp O."/>
            <person name="Schneiker S."/>
            <person name="Schuster S.C."/>
            <person name="Vorhoelter F.J."/>
            <person name="Weber E."/>
            <person name="Puehler A."/>
            <person name="Bonas U."/>
            <person name="Bartels D."/>
            <person name="Kaiser O."/>
        </authorList>
    </citation>
    <scope>NUCLEOTIDE SEQUENCE [LARGE SCALE GENOMIC DNA]</scope>
    <source>
        <strain>85-10</strain>
    </source>
</reference>
<name>MNME_XANE5</name>
<accession>Q3BLZ9</accession>
<gene>
    <name evidence="1" type="primary">mnmE</name>
    <name evidence="1" type="synonym">trmE</name>
    <name type="ordered locus">XCV4483</name>
</gene>
<dbReference type="EC" id="3.6.-.-" evidence="1"/>
<dbReference type="EMBL" id="AM039952">
    <property type="protein sequence ID" value="CAJ26214.1"/>
    <property type="molecule type" value="Genomic_DNA"/>
</dbReference>
<dbReference type="RefSeq" id="WP_011349216.1">
    <property type="nucleotide sequence ID" value="NZ_CP017190.1"/>
</dbReference>
<dbReference type="SMR" id="Q3BLZ9"/>
<dbReference type="STRING" id="456327.BJD11_22975"/>
<dbReference type="KEGG" id="xcv:XCV4483"/>
<dbReference type="eggNOG" id="COG0486">
    <property type="taxonomic scope" value="Bacteria"/>
</dbReference>
<dbReference type="HOGENOM" id="CLU_019624_3_1_6"/>
<dbReference type="Proteomes" id="UP000007069">
    <property type="component" value="Chromosome"/>
</dbReference>
<dbReference type="GO" id="GO:0005829">
    <property type="term" value="C:cytosol"/>
    <property type="evidence" value="ECO:0007669"/>
    <property type="project" value="TreeGrafter"/>
</dbReference>
<dbReference type="GO" id="GO:0005525">
    <property type="term" value="F:GTP binding"/>
    <property type="evidence" value="ECO:0007669"/>
    <property type="project" value="UniProtKB-UniRule"/>
</dbReference>
<dbReference type="GO" id="GO:0003924">
    <property type="term" value="F:GTPase activity"/>
    <property type="evidence" value="ECO:0007669"/>
    <property type="project" value="UniProtKB-UniRule"/>
</dbReference>
<dbReference type="GO" id="GO:0046872">
    <property type="term" value="F:metal ion binding"/>
    <property type="evidence" value="ECO:0007669"/>
    <property type="project" value="UniProtKB-KW"/>
</dbReference>
<dbReference type="GO" id="GO:0030488">
    <property type="term" value="P:tRNA methylation"/>
    <property type="evidence" value="ECO:0007669"/>
    <property type="project" value="TreeGrafter"/>
</dbReference>
<dbReference type="GO" id="GO:0002098">
    <property type="term" value="P:tRNA wobble uridine modification"/>
    <property type="evidence" value="ECO:0007669"/>
    <property type="project" value="TreeGrafter"/>
</dbReference>
<dbReference type="CDD" id="cd04164">
    <property type="entry name" value="trmE"/>
    <property type="match status" value="1"/>
</dbReference>
<dbReference type="CDD" id="cd14858">
    <property type="entry name" value="TrmE_N"/>
    <property type="match status" value="1"/>
</dbReference>
<dbReference type="FunFam" id="3.40.50.300:FF:001376">
    <property type="entry name" value="tRNA modification GTPase MnmE"/>
    <property type="match status" value="1"/>
</dbReference>
<dbReference type="Gene3D" id="3.40.50.300">
    <property type="entry name" value="P-loop containing nucleotide triphosphate hydrolases"/>
    <property type="match status" value="1"/>
</dbReference>
<dbReference type="Gene3D" id="3.30.1360.120">
    <property type="entry name" value="Probable tRNA modification gtpase trme, domain 1"/>
    <property type="match status" value="1"/>
</dbReference>
<dbReference type="Gene3D" id="1.20.120.430">
    <property type="entry name" value="tRNA modification GTPase MnmE domain 2"/>
    <property type="match status" value="1"/>
</dbReference>
<dbReference type="HAMAP" id="MF_00379">
    <property type="entry name" value="GTPase_MnmE"/>
    <property type="match status" value="1"/>
</dbReference>
<dbReference type="InterPro" id="IPR031168">
    <property type="entry name" value="G_TrmE"/>
</dbReference>
<dbReference type="InterPro" id="IPR006073">
    <property type="entry name" value="GTP-bd"/>
</dbReference>
<dbReference type="InterPro" id="IPR018948">
    <property type="entry name" value="GTP-bd_TrmE_N"/>
</dbReference>
<dbReference type="InterPro" id="IPR004520">
    <property type="entry name" value="GTPase_MnmE"/>
</dbReference>
<dbReference type="InterPro" id="IPR027368">
    <property type="entry name" value="MnmE_dom2"/>
</dbReference>
<dbReference type="InterPro" id="IPR025867">
    <property type="entry name" value="MnmE_helical"/>
</dbReference>
<dbReference type="InterPro" id="IPR027417">
    <property type="entry name" value="P-loop_NTPase"/>
</dbReference>
<dbReference type="InterPro" id="IPR005225">
    <property type="entry name" value="Small_GTP-bd"/>
</dbReference>
<dbReference type="InterPro" id="IPR027266">
    <property type="entry name" value="TrmE/GcvT_dom1"/>
</dbReference>
<dbReference type="NCBIfam" id="TIGR00450">
    <property type="entry name" value="mnmE_trmE_thdF"/>
    <property type="match status" value="1"/>
</dbReference>
<dbReference type="NCBIfam" id="NF003661">
    <property type="entry name" value="PRK05291.1-3"/>
    <property type="match status" value="1"/>
</dbReference>
<dbReference type="NCBIfam" id="TIGR00231">
    <property type="entry name" value="small_GTP"/>
    <property type="match status" value="1"/>
</dbReference>
<dbReference type="PANTHER" id="PTHR42714">
    <property type="entry name" value="TRNA MODIFICATION GTPASE GTPBP3"/>
    <property type="match status" value="1"/>
</dbReference>
<dbReference type="PANTHER" id="PTHR42714:SF2">
    <property type="entry name" value="TRNA MODIFICATION GTPASE GTPBP3, MITOCHONDRIAL"/>
    <property type="match status" value="1"/>
</dbReference>
<dbReference type="Pfam" id="PF01926">
    <property type="entry name" value="MMR_HSR1"/>
    <property type="match status" value="1"/>
</dbReference>
<dbReference type="Pfam" id="PF12631">
    <property type="entry name" value="MnmE_helical"/>
    <property type="match status" value="1"/>
</dbReference>
<dbReference type="Pfam" id="PF10396">
    <property type="entry name" value="TrmE_N"/>
    <property type="match status" value="1"/>
</dbReference>
<dbReference type="PRINTS" id="PR00326">
    <property type="entry name" value="GTP1OBG"/>
</dbReference>
<dbReference type="SUPFAM" id="SSF52540">
    <property type="entry name" value="P-loop containing nucleoside triphosphate hydrolases"/>
    <property type="match status" value="1"/>
</dbReference>
<dbReference type="PROSITE" id="PS51709">
    <property type="entry name" value="G_TRME"/>
    <property type="match status" value="1"/>
</dbReference>
<organism>
    <name type="scientific">Xanthomonas euvesicatoria pv. vesicatoria (strain 85-10)</name>
    <name type="common">Xanthomonas campestris pv. vesicatoria</name>
    <dbReference type="NCBI Taxonomy" id="316273"/>
    <lineage>
        <taxon>Bacteria</taxon>
        <taxon>Pseudomonadati</taxon>
        <taxon>Pseudomonadota</taxon>
        <taxon>Gammaproteobacteria</taxon>
        <taxon>Lysobacterales</taxon>
        <taxon>Lysobacteraceae</taxon>
        <taxon>Xanthomonas</taxon>
    </lineage>
</organism>
<comment type="function">
    <text evidence="1">Exhibits a very high intrinsic GTPase hydrolysis rate. Involved in the addition of a carboxymethylaminomethyl (cmnm) group at the wobble position (U34) of certain tRNAs, forming tRNA-cmnm(5)s(2)U34.</text>
</comment>
<comment type="cofactor">
    <cofactor evidence="1">
        <name>K(+)</name>
        <dbReference type="ChEBI" id="CHEBI:29103"/>
    </cofactor>
    <text evidence="1">Binds 1 potassium ion per subunit.</text>
</comment>
<comment type="subunit">
    <text evidence="1">Homodimer. Heterotetramer of two MnmE and two MnmG subunits.</text>
</comment>
<comment type="subcellular location">
    <subcellularLocation>
        <location evidence="1">Cytoplasm</location>
    </subcellularLocation>
</comment>
<comment type="similarity">
    <text evidence="1">Belongs to the TRAFAC class TrmE-Era-EngA-EngB-Septin-like GTPase superfamily. TrmE GTPase family.</text>
</comment>
<keyword id="KW-0963">Cytoplasm</keyword>
<keyword id="KW-0342">GTP-binding</keyword>
<keyword id="KW-0378">Hydrolase</keyword>
<keyword id="KW-0460">Magnesium</keyword>
<keyword id="KW-0479">Metal-binding</keyword>
<keyword id="KW-0547">Nucleotide-binding</keyword>
<keyword id="KW-0630">Potassium</keyword>
<keyword id="KW-0819">tRNA processing</keyword>
<proteinExistence type="inferred from homology"/>
<protein>
    <recommendedName>
        <fullName evidence="1">tRNA modification GTPase MnmE</fullName>
        <ecNumber evidence="1">3.6.-.-</ecNumber>
    </recommendedName>
</protein>